<dbReference type="EMBL" id="AP006715">
    <property type="protein sequence ID" value="BAE92342.1"/>
    <property type="molecule type" value="Genomic_DNA"/>
</dbReference>
<dbReference type="RefSeq" id="YP_536899.1">
    <property type="nucleotide sequence ID" value="NC_007932.1"/>
</dbReference>
<dbReference type="SMR" id="Q1XDR9"/>
<dbReference type="GO" id="GO:0009570">
    <property type="term" value="C:chloroplast stroma"/>
    <property type="evidence" value="ECO:0007669"/>
    <property type="project" value="TreeGrafter"/>
</dbReference>
<dbReference type="GO" id="GO:0051536">
    <property type="term" value="F:iron-sulfur cluster binding"/>
    <property type="evidence" value="ECO:0007669"/>
    <property type="project" value="InterPro"/>
</dbReference>
<dbReference type="GO" id="GO:0046872">
    <property type="term" value="F:metal ion binding"/>
    <property type="evidence" value="ECO:0007669"/>
    <property type="project" value="UniProtKB-KW"/>
</dbReference>
<dbReference type="GO" id="GO:0030674">
    <property type="term" value="F:protein-macromolecule adaptor activity"/>
    <property type="evidence" value="ECO:0007669"/>
    <property type="project" value="TreeGrafter"/>
</dbReference>
<dbReference type="GO" id="GO:0016226">
    <property type="term" value="P:iron-sulfur cluster assembly"/>
    <property type="evidence" value="ECO:0007669"/>
    <property type="project" value="InterPro"/>
</dbReference>
<dbReference type="Gene3D" id="2.60.300.12">
    <property type="entry name" value="HesB-like domain"/>
    <property type="match status" value="1"/>
</dbReference>
<dbReference type="InterPro" id="IPR000361">
    <property type="entry name" value="FeS_biogenesis"/>
</dbReference>
<dbReference type="InterPro" id="IPR016092">
    <property type="entry name" value="FeS_cluster_insertion"/>
</dbReference>
<dbReference type="InterPro" id="IPR017870">
    <property type="entry name" value="FeS_cluster_insertion_CS"/>
</dbReference>
<dbReference type="InterPro" id="IPR035903">
    <property type="entry name" value="HesB-like_dom_sf"/>
</dbReference>
<dbReference type="InterPro" id="IPR031108">
    <property type="entry name" value="ISCA_plant_cyanobact"/>
</dbReference>
<dbReference type="NCBIfam" id="TIGR00049">
    <property type="entry name" value="iron-sulfur cluster assembly accessory protein"/>
    <property type="match status" value="1"/>
</dbReference>
<dbReference type="PANTHER" id="PTHR47265">
    <property type="entry name" value="IRON-SULFUR ASSEMBLY PROTEIN ISCA, CHLOROPLASTIC"/>
    <property type="match status" value="1"/>
</dbReference>
<dbReference type="PANTHER" id="PTHR47265:SF1">
    <property type="entry name" value="IRON-SULFUR ASSEMBLY PROTEIN ISCA, CHLOROPLASTIC"/>
    <property type="match status" value="1"/>
</dbReference>
<dbReference type="Pfam" id="PF01521">
    <property type="entry name" value="Fe-S_biosyn"/>
    <property type="match status" value="1"/>
</dbReference>
<dbReference type="SUPFAM" id="SSF89360">
    <property type="entry name" value="HesB-like domain"/>
    <property type="match status" value="1"/>
</dbReference>
<dbReference type="PROSITE" id="PS01152">
    <property type="entry name" value="HESB"/>
    <property type="match status" value="1"/>
</dbReference>
<name>YCF83_PYRYE</name>
<geneLocation type="chloroplast"/>
<reference key="1">
    <citation type="submission" date="2003-11" db="EMBL/GenBank/DDBJ databases">
        <title>Whole genome sequence of Porphyra yezoensis chloroplast.</title>
        <authorList>
            <person name="Kunimoto M."/>
            <person name="Morishima K."/>
            <person name="Yoshikawa M."/>
            <person name="Fukuda S."/>
            <person name="Kobayashi T."/>
            <person name="Kobayashi M."/>
            <person name="Okazaki T."/>
            <person name="Ohara I."/>
            <person name="Nakayama I."/>
        </authorList>
    </citation>
    <scope>NUCLEOTIDE SEQUENCE [LARGE SCALE GENOMIC DNA]</scope>
    <source>
        <strain>U-51</strain>
    </source>
</reference>
<keyword id="KW-0150">Chloroplast</keyword>
<keyword id="KW-0408">Iron</keyword>
<keyword id="KW-0479">Metal-binding</keyword>
<keyword id="KW-0934">Plastid</keyword>
<feature type="chain" id="PRO_0000277315" description="Uncharacterized protein ycf83">
    <location>
        <begin position="1"/>
        <end position="114"/>
    </location>
</feature>
<feature type="binding site" evidence="1">
    <location>
        <position position="40"/>
    </location>
    <ligand>
        <name>Fe cation</name>
        <dbReference type="ChEBI" id="CHEBI:24875"/>
    </ligand>
</feature>
<feature type="binding site" evidence="1">
    <location>
        <position position="106"/>
    </location>
    <ligand>
        <name>Fe cation</name>
        <dbReference type="ChEBI" id="CHEBI:24875"/>
    </ligand>
</feature>
<feature type="binding site" evidence="1">
    <location>
        <position position="108"/>
    </location>
    <ligand>
        <name>Fe cation</name>
        <dbReference type="ChEBI" id="CHEBI:24875"/>
    </ligand>
</feature>
<sequence length="114" mass="12514">MEGNMGFITITKPALKQIAILKNDHENDVHLRIGVRQGGCSGMSYSMNFEHVDKLKDTDERLRLDNFSVVCDPKSLLYLYGLSLDFSSELIGGGFQFSNPNASQTCGCGKSFSG</sequence>
<protein>
    <recommendedName>
        <fullName>Uncharacterized protein ycf83</fullName>
    </recommendedName>
</protein>
<organism>
    <name type="scientific">Pyropia yezoensis</name>
    <name type="common">Susabi-nori</name>
    <name type="synonym">Porphyra yezoensis</name>
    <dbReference type="NCBI Taxonomy" id="2788"/>
    <lineage>
        <taxon>Eukaryota</taxon>
        <taxon>Rhodophyta</taxon>
        <taxon>Bangiophyceae</taxon>
        <taxon>Bangiales</taxon>
        <taxon>Bangiaceae</taxon>
        <taxon>Pyropia</taxon>
    </lineage>
</organism>
<proteinExistence type="inferred from homology"/>
<accession>Q1XDR9</accession>
<gene>
    <name type="primary">ycf83</name>
</gene>
<comment type="subcellular location">
    <subcellularLocation>
        <location>Plastid</location>
        <location>Chloroplast</location>
    </subcellularLocation>
</comment>
<comment type="similarity">
    <text evidence="2">Belongs to the HesB/IscA family. Ycf83 subfamily.</text>
</comment>
<evidence type="ECO:0000250" key="1">
    <source>
        <dbReference type="UniProtKB" id="P0AAC8"/>
    </source>
</evidence>
<evidence type="ECO:0000305" key="2"/>